<comment type="function">
    <text evidence="3 4">Promotes the biosynthesis of heme as well as the assembly and repair of iron-sulfur clusters by delivering Fe(2+) to proteins involved in these pathways (PubMed:18540637). May play a role in the protection against iron-catalyzed oxidative stress through its ability to catalyze the oxidation of Fe(2+) to Fe(3+) (PubMed:18540637). May be able to store large amounts of the metal in the form of a ferrihydrite mineral by oligomerization (PubMed:18540637). Required for ecdysteroidogenesis in the prothoracic gland which is necessary for larval to pupal transition (PubMed:25628335).</text>
</comment>
<comment type="catalytic activity">
    <reaction evidence="3">
        <text>4 Fe(2+) + O2 + 4 H(+) = 4 Fe(3+) + 2 H2O</text>
        <dbReference type="Rhea" id="RHEA:11148"/>
        <dbReference type="ChEBI" id="CHEBI:15377"/>
        <dbReference type="ChEBI" id="CHEBI:15378"/>
        <dbReference type="ChEBI" id="CHEBI:15379"/>
        <dbReference type="ChEBI" id="CHEBI:29033"/>
        <dbReference type="ChEBI" id="CHEBI:29034"/>
        <dbReference type="EC" id="1.16.3.1"/>
    </reaction>
</comment>
<comment type="subunit">
    <text evidence="1 3 7">Monomer (probable predominant form) (PubMed:18540637). Oligomer (PubMed:18540637). Interacts with IscU (By similarity). Component of the mitochondrial core iron-sulfur cluster (ISC) assembly complex at least composed of the cysteine desulfurase Nfs1, the scaffold protein IscU, the accessory protein bcn92/Isd11/Lyrm4, and probably fh/frataxin (Probable).</text>
</comment>
<comment type="subcellular location">
    <subcellularLocation>
        <location evidence="1">Mitochondrion</location>
    </subcellularLocation>
</comment>
<comment type="developmental stage">
    <text evidence="2">Expressed throughout development, levels are high during embryogenesis but low in following stages.</text>
</comment>
<comment type="disruption phenotype">
    <text evidence="4">RNAi-mediated knockdown results in nearly absent pupariation and reduced ecdysteroid peak level required to proceed to pupal stage (PubMed:25628335). RNAi-mediated knockdown in the prothoracic gland results in delayed or absent pupariation (PubMed:25628335).</text>
</comment>
<comment type="similarity">
    <text evidence="6">Belongs to the frataxin family.</text>
</comment>
<accession>Q9W385</accession>
<accession>Q9GQQ7</accession>
<reference key="1">
    <citation type="journal article" date="2000" name="Gene">
        <title>dfh is a Drosophila homolog of the Friedreich's ataxia disease gene.</title>
        <authorList>
            <person name="Canizares-Sales J."/>
            <person name="Blanca-Postigo J.M."/>
            <person name="Navarro J.A."/>
            <person name="Monros E."/>
            <person name="Palau-Martinez F."/>
            <person name="Molto-Ruiz M.D."/>
        </authorList>
    </citation>
    <scope>NUCLEOTIDE SEQUENCE [GENOMIC DNA / MRNA]</scope>
    <scope>DEVELOPMENTAL STAGE</scope>
</reference>
<reference key="2">
    <citation type="journal article" date="2000" name="Science">
        <title>The genome sequence of Drosophila melanogaster.</title>
        <authorList>
            <person name="Adams M.D."/>
            <person name="Celniker S.E."/>
            <person name="Holt R.A."/>
            <person name="Evans C.A."/>
            <person name="Gocayne J.D."/>
            <person name="Amanatides P.G."/>
            <person name="Scherer S.E."/>
            <person name="Li P.W."/>
            <person name="Hoskins R.A."/>
            <person name="Galle R.F."/>
            <person name="George R.A."/>
            <person name="Lewis S.E."/>
            <person name="Richards S."/>
            <person name="Ashburner M."/>
            <person name="Henderson S.N."/>
            <person name="Sutton G.G."/>
            <person name="Wortman J.R."/>
            <person name="Yandell M.D."/>
            <person name="Zhang Q."/>
            <person name="Chen L.X."/>
            <person name="Brandon R.C."/>
            <person name="Rogers Y.-H.C."/>
            <person name="Blazej R.G."/>
            <person name="Champe M."/>
            <person name="Pfeiffer B.D."/>
            <person name="Wan K.H."/>
            <person name="Doyle C."/>
            <person name="Baxter E.G."/>
            <person name="Helt G."/>
            <person name="Nelson C.R."/>
            <person name="Miklos G.L.G."/>
            <person name="Abril J.F."/>
            <person name="Agbayani A."/>
            <person name="An H.-J."/>
            <person name="Andrews-Pfannkoch C."/>
            <person name="Baldwin D."/>
            <person name="Ballew R.M."/>
            <person name="Basu A."/>
            <person name="Baxendale J."/>
            <person name="Bayraktaroglu L."/>
            <person name="Beasley E.M."/>
            <person name="Beeson K.Y."/>
            <person name="Benos P.V."/>
            <person name="Berman B.P."/>
            <person name="Bhandari D."/>
            <person name="Bolshakov S."/>
            <person name="Borkova D."/>
            <person name="Botchan M.R."/>
            <person name="Bouck J."/>
            <person name="Brokstein P."/>
            <person name="Brottier P."/>
            <person name="Burtis K.C."/>
            <person name="Busam D.A."/>
            <person name="Butler H."/>
            <person name="Cadieu E."/>
            <person name="Center A."/>
            <person name="Chandra I."/>
            <person name="Cherry J.M."/>
            <person name="Cawley S."/>
            <person name="Dahlke C."/>
            <person name="Davenport L.B."/>
            <person name="Davies P."/>
            <person name="de Pablos B."/>
            <person name="Delcher A."/>
            <person name="Deng Z."/>
            <person name="Mays A.D."/>
            <person name="Dew I."/>
            <person name="Dietz S.M."/>
            <person name="Dodson K."/>
            <person name="Doup L.E."/>
            <person name="Downes M."/>
            <person name="Dugan-Rocha S."/>
            <person name="Dunkov B.C."/>
            <person name="Dunn P."/>
            <person name="Durbin K.J."/>
            <person name="Evangelista C.C."/>
            <person name="Ferraz C."/>
            <person name="Ferriera S."/>
            <person name="Fleischmann W."/>
            <person name="Fosler C."/>
            <person name="Gabrielian A.E."/>
            <person name="Garg N.S."/>
            <person name="Gelbart W.M."/>
            <person name="Glasser K."/>
            <person name="Glodek A."/>
            <person name="Gong F."/>
            <person name="Gorrell J.H."/>
            <person name="Gu Z."/>
            <person name="Guan P."/>
            <person name="Harris M."/>
            <person name="Harris N.L."/>
            <person name="Harvey D.A."/>
            <person name="Heiman T.J."/>
            <person name="Hernandez J.R."/>
            <person name="Houck J."/>
            <person name="Hostin D."/>
            <person name="Houston K.A."/>
            <person name="Howland T.J."/>
            <person name="Wei M.-H."/>
            <person name="Ibegwam C."/>
            <person name="Jalali M."/>
            <person name="Kalush F."/>
            <person name="Karpen G.H."/>
            <person name="Ke Z."/>
            <person name="Kennison J.A."/>
            <person name="Ketchum K.A."/>
            <person name="Kimmel B.E."/>
            <person name="Kodira C.D."/>
            <person name="Kraft C.L."/>
            <person name="Kravitz S."/>
            <person name="Kulp D."/>
            <person name="Lai Z."/>
            <person name="Lasko P."/>
            <person name="Lei Y."/>
            <person name="Levitsky A.A."/>
            <person name="Li J.H."/>
            <person name="Li Z."/>
            <person name="Liang Y."/>
            <person name="Lin X."/>
            <person name="Liu X."/>
            <person name="Mattei B."/>
            <person name="McIntosh T.C."/>
            <person name="McLeod M.P."/>
            <person name="McPherson D."/>
            <person name="Merkulov G."/>
            <person name="Milshina N.V."/>
            <person name="Mobarry C."/>
            <person name="Morris J."/>
            <person name="Moshrefi A."/>
            <person name="Mount S.M."/>
            <person name="Moy M."/>
            <person name="Murphy B."/>
            <person name="Murphy L."/>
            <person name="Muzny D.M."/>
            <person name="Nelson D.L."/>
            <person name="Nelson D.R."/>
            <person name="Nelson K.A."/>
            <person name="Nixon K."/>
            <person name="Nusskern D.R."/>
            <person name="Pacleb J.M."/>
            <person name="Palazzolo M."/>
            <person name="Pittman G.S."/>
            <person name="Pan S."/>
            <person name="Pollard J."/>
            <person name="Puri V."/>
            <person name="Reese M.G."/>
            <person name="Reinert K."/>
            <person name="Remington K."/>
            <person name="Saunders R.D.C."/>
            <person name="Scheeler F."/>
            <person name="Shen H."/>
            <person name="Shue B.C."/>
            <person name="Siden-Kiamos I."/>
            <person name="Simpson M."/>
            <person name="Skupski M.P."/>
            <person name="Smith T.J."/>
            <person name="Spier E."/>
            <person name="Spradling A.C."/>
            <person name="Stapleton M."/>
            <person name="Strong R."/>
            <person name="Sun E."/>
            <person name="Svirskas R."/>
            <person name="Tector C."/>
            <person name="Turner R."/>
            <person name="Venter E."/>
            <person name="Wang A.H."/>
            <person name="Wang X."/>
            <person name="Wang Z.-Y."/>
            <person name="Wassarman D.A."/>
            <person name="Weinstock G.M."/>
            <person name="Weissenbach J."/>
            <person name="Williams S.M."/>
            <person name="Woodage T."/>
            <person name="Worley K.C."/>
            <person name="Wu D."/>
            <person name="Yang S."/>
            <person name="Yao Q.A."/>
            <person name="Ye J."/>
            <person name="Yeh R.-F."/>
            <person name="Zaveri J.S."/>
            <person name="Zhan M."/>
            <person name="Zhang G."/>
            <person name="Zhao Q."/>
            <person name="Zheng L."/>
            <person name="Zheng X.H."/>
            <person name="Zhong F.N."/>
            <person name="Zhong W."/>
            <person name="Zhou X."/>
            <person name="Zhu S.C."/>
            <person name="Zhu X."/>
            <person name="Smith H.O."/>
            <person name="Gibbs R.A."/>
            <person name="Myers E.W."/>
            <person name="Rubin G.M."/>
            <person name="Venter J.C."/>
        </authorList>
    </citation>
    <scope>NUCLEOTIDE SEQUENCE [LARGE SCALE GENOMIC DNA]</scope>
    <source>
        <strain>Berkeley</strain>
    </source>
</reference>
<reference key="3">
    <citation type="journal article" date="2002" name="Genome Biol.">
        <title>Annotation of the Drosophila melanogaster euchromatic genome: a systematic review.</title>
        <authorList>
            <person name="Misra S."/>
            <person name="Crosby M.A."/>
            <person name="Mungall C.J."/>
            <person name="Matthews B.B."/>
            <person name="Campbell K.S."/>
            <person name="Hradecky P."/>
            <person name="Huang Y."/>
            <person name="Kaminker J.S."/>
            <person name="Millburn G.H."/>
            <person name="Prochnik S.E."/>
            <person name="Smith C.D."/>
            <person name="Tupy J.L."/>
            <person name="Whitfield E.J."/>
            <person name="Bayraktaroglu L."/>
            <person name="Berman B.P."/>
            <person name="Bettencourt B.R."/>
            <person name="Celniker S.E."/>
            <person name="de Grey A.D.N.J."/>
            <person name="Drysdale R.A."/>
            <person name="Harris N.L."/>
            <person name="Richter J."/>
            <person name="Russo S."/>
            <person name="Schroeder A.J."/>
            <person name="Shu S.Q."/>
            <person name="Stapleton M."/>
            <person name="Yamada C."/>
            <person name="Ashburner M."/>
            <person name="Gelbart W.M."/>
            <person name="Rubin G.M."/>
            <person name="Lewis S.E."/>
        </authorList>
    </citation>
    <scope>GENOME REANNOTATION</scope>
    <source>
        <strain>Berkeley</strain>
    </source>
</reference>
<reference key="4">
    <citation type="journal article" date="2002" name="Genome Biol.">
        <title>A Drosophila full-length cDNA resource.</title>
        <authorList>
            <person name="Stapleton M."/>
            <person name="Carlson J.W."/>
            <person name="Brokstein P."/>
            <person name="Yu C."/>
            <person name="Champe M."/>
            <person name="George R.A."/>
            <person name="Guarin H."/>
            <person name="Kronmiller B."/>
            <person name="Pacleb J.M."/>
            <person name="Park S."/>
            <person name="Wan K.H."/>
            <person name="Rubin G.M."/>
            <person name="Celniker S.E."/>
        </authorList>
    </citation>
    <scope>NUCLEOTIDE SEQUENCE [LARGE SCALE MRNA]</scope>
    <source>
        <strain>Berkeley</strain>
        <tissue>Testis</tissue>
    </source>
</reference>
<reference key="5">
    <citation type="journal article" date="2008" name="Biochemistry">
        <title>Drosophila frataxin: an iron chaperone during cellular Fe-S cluster bioassembly.</title>
        <authorList>
            <person name="Kondapalli K.C."/>
            <person name="Kok N.M."/>
            <person name="Dancis A."/>
            <person name="Stemmler T.L."/>
        </authorList>
    </citation>
    <scope>FUNCTION</scope>
    <scope>CATALYTIC ACTIVITY</scope>
</reference>
<reference key="6">
    <citation type="journal article" date="2015" name="Hum. Mol. Genet.">
        <title>Frataxin inactivation leads to steroid deficiency in flies and human ovarian cells.</title>
        <authorList>
            <person name="Palandri A."/>
            <person name="L'hote D."/>
            <person name="Cohen-Tannoudji J."/>
            <person name="Tricoire H."/>
            <person name="Monnier V."/>
        </authorList>
    </citation>
    <scope>FUNCTION</scope>
    <scope>DISRUPTION PHENOTYPE</scope>
    <scope>SUBUNIT</scope>
</reference>
<reference key="7">
    <citation type="journal article" date="2018" name="Front. Physiol.">
        <title>Iron Sulfur and Molybdenum Cofactor Enzymes Regulate the Drosophila Life Cycle by Controlling Cell Metabolism.</title>
        <authorList>
            <person name="Marelja Z."/>
            <person name="Leimkuehler S."/>
            <person name="Missirlis F."/>
        </authorList>
    </citation>
    <scope>INTERACTION WITH BCN92; ISCU AND NSF1</scope>
</reference>
<reference evidence="10" key="8">
    <citation type="journal article" date="2023" name="Acta Crystallogr. D Struct. Biol.">
        <title>Drosophila melanogaster frataxin: protein crystal and predicted solution structure with identification of the iron-binding regions.</title>
        <authorList>
            <person name="Rodrigues A.V."/>
            <person name="Batelu S."/>
            <person name="Hinton T.V."/>
            <person name="Rotondo J."/>
            <person name="Thompson L."/>
            <person name="Brunzelle J.S."/>
            <person name="Stemmler T.L."/>
        </authorList>
    </citation>
    <scope>X-RAY CRYSTALLOGRAPHY (1.40 ANGSTROMS)</scope>
    <scope>STRUCTURE BY NMR IN COMPLEX WITH FE(2+)</scope>
</reference>
<evidence type="ECO:0000250" key="1">
    <source>
        <dbReference type="UniProtKB" id="Q16595"/>
    </source>
</evidence>
<evidence type="ECO:0000269" key="2">
    <source>
    </source>
</evidence>
<evidence type="ECO:0000269" key="3">
    <source>
    </source>
</evidence>
<evidence type="ECO:0000269" key="4">
    <source>
    </source>
</evidence>
<evidence type="ECO:0000303" key="5">
    <source>
    </source>
</evidence>
<evidence type="ECO:0000305" key="6"/>
<evidence type="ECO:0000305" key="7">
    <source>
    </source>
</evidence>
<evidence type="ECO:0000312" key="8">
    <source>
        <dbReference type="FlyBase" id="FBgn0030092"/>
    </source>
</evidence>
<evidence type="ECO:0000312" key="9">
    <source>
        <dbReference type="Proteomes" id="UP000000803"/>
    </source>
</evidence>
<evidence type="ECO:0007744" key="10">
    <source>
        <dbReference type="PDB" id="7N9I"/>
    </source>
</evidence>
<evidence type="ECO:0007829" key="11">
    <source>
        <dbReference type="PDB" id="7N9I"/>
    </source>
</evidence>
<proteinExistence type="evidence at protein level"/>
<feature type="transit peptide" description="Mitochondrion">
    <location>
        <begin position="1"/>
        <end status="unknown"/>
    </location>
</feature>
<feature type="chain" id="PRO_0000010133" description="Frataxin homolog, mitochondrial">
    <location>
        <begin status="unknown"/>
        <end position="190"/>
    </location>
</feature>
<feature type="helix" evidence="11">
    <location>
        <begin position="70"/>
        <end position="94"/>
    </location>
</feature>
<feature type="strand" evidence="11">
    <location>
        <begin position="101"/>
        <end position="106"/>
    </location>
</feature>
<feature type="strand" evidence="11">
    <location>
        <begin position="109"/>
        <end position="114"/>
    </location>
</feature>
<feature type="turn" evidence="11">
    <location>
        <begin position="116"/>
        <end position="118"/>
    </location>
</feature>
<feature type="strand" evidence="11">
    <location>
        <begin position="120"/>
        <end position="126"/>
    </location>
</feature>
<feature type="helix" evidence="11">
    <location>
        <begin position="127"/>
        <end position="129"/>
    </location>
</feature>
<feature type="strand" evidence="11">
    <location>
        <begin position="131"/>
        <end position="136"/>
    </location>
</feature>
<feature type="turn" evidence="11">
    <location>
        <begin position="137"/>
        <end position="139"/>
    </location>
</feature>
<feature type="strand" evidence="11">
    <location>
        <begin position="140"/>
        <end position="148"/>
    </location>
</feature>
<feature type="strand" evidence="11">
    <location>
        <begin position="150"/>
        <end position="157"/>
    </location>
</feature>
<feature type="strand" evidence="11">
    <location>
        <begin position="161"/>
        <end position="163"/>
    </location>
</feature>
<feature type="helix" evidence="11">
    <location>
        <begin position="164"/>
        <end position="171"/>
    </location>
</feature>
<feature type="turn" evidence="11">
    <location>
        <begin position="173"/>
        <end position="175"/>
    </location>
</feature>
<feature type="helix" evidence="11">
    <location>
        <begin position="183"/>
        <end position="185"/>
    </location>
</feature>
<feature type="strand" evidence="11">
    <location>
        <begin position="186"/>
        <end position="188"/>
    </location>
</feature>
<protein>
    <recommendedName>
        <fullName>Frataxin homolog, mitochondrial</fullName>
        <shortName evidence="5 8">Dfh</shortName>
        <ecNumber evidence="3">1.16.3.1</ecNumber>
    </recommendedName>
</protein>
<sequence length="190" mass="20922">MFAGRLMVRSIVGRACLATMGRWSKPQAHASQVILPSTPAIAAVAIQCEEFTANRRLFSSQIETESTLDGATYERVCSDTLDALCDYFEELTENASELQGTDVAYSDGVLTVNLGGQHGTYVINRQTPNKQIWLSSPTSGPKRYDFVGTVAAGRWIYKHSGQSLHELLQQEIPGILKSQSVDFLRLPYCS</sequence>
<dbReference type="EC" id="1.16.3.1" evidence="3"/>
<dbReference type="EMBL" id="AJ002208">
    <property type="protein sequence ID" value="CAC20098.1"/>
    <property type="molecule type" value="mRNA"/>
</dbReference>
<dbReference type="EMBL" id="AF208491">
    <property type="protein sequence ID" value="AAG35732.1"/>
    <property type="molecule type" value="mRNA"/>
</dbReference>
<dbReference type="EMBL" id="AF208492">
    <property type="protein sequence ID" value="AAG35733.1"/>
    <property type="molecule type" value="Genomic_DNA"/>
</dbReference>
<dbReference type="EMBL" id="AE014298">
    <property type="protein sequence ID" value="AAF46449.1"/>
    <property type="molecule type" value="Genomic_DNA"/>
</dbReference>
<dbReference type="EMBL" id="AY094649">
    <property type="protein sequence ID" value="AAM11002.1"/>
    <property type="molecule type" value="mRNA"/>
</dbReference>
<dbReference type="RefSeq" id="NP_511094.1">
    <property type="nucleotide sequence ID" value="NM_078539.3"/>
</dbReference>
<dbReference type="PDB" id="7N9I">
    <property type="method" value="X-ray"/>
    <property type="resolution" value="1.40 A"/>
    <property type="chains" value="A=1-190"/>
</dbReference>
<dbReference type="PDBsum" id="7N9I"/>
<dbReference type="BMRB" id="Q9W385"/>
<dbReference type="SMR" id="Q9W385"/>
<dbReference type="BioGRID" id="58300">
    <property type="interactions" value="14"/>
</dbReference>
<dbReference type="FunCoup" id="Q9W385">
    <property type="interactions" value="699"/>
</dbReference>
<dbReference type="IntAct" id="Q9W385">
    <property type="interactions" value="13"/>
</dbReference>
<dbReference type="STRING" id="7227.FBpp0071283"/>
<dbReference type="PaxDb" id="7227-FBpp0071283"/>
<dbReference type="DNASU" id="31845"/>
<dbReference type="EnsemblMetazoa" id="FBtr0071348">
    <property type="protein sequence ID" value="FBpp0071283"/>
    <property type="gene ID" value="FBgn0030092"/>
</dbReference>
<dbReference type="GeneID" id="31845"/>
<dbReference type="KEGG" id="dme:Dmel_CG8971"/>
<dbReference type="AGR" id="FB:FBgn0030092"/>
<dbReference type="CTD" id="2271"/>
<dbReference type="FlyBase" id="FBgn0030092">
    <property type="gene designation" value="fh"/>
</dbReference>
<dbReference type="VEuPathDB" id="VectorBase:FBgn0030092"/>
<dbReference type="eggNOG" id="KOG3413">
    <property type="taxonomic scope" value="Eukaryota"/>
</dbReference>
<dbReference type="GeneTree" id="ENSGT00390000005811"/>
<dbReference type="HOGENOM" id="CLU_080880_2_1_1"/>
<dbReference type="InParanoid" id="Q9W385"/>
<dbReference type="OMA" id="YERVCSD"/>
<dbReference type="OrthoDB" id="1897642at2759"/>
<dbReference type="PhylomeDB" id="Q9W385"/>
<dbReference type="Reactome" id="R-DME-1362409">
    <property type="pathway name" value="Mitochondrial iron-sulfur cluster biogenesis"/>
</dbReference>
<dbReference type="Reactome" id="R-DME-9854311">
    <property type="pathway name" value="Maturation of TCA enzymes and regulation of TCA cycle"/>
</dbReference>
<dbReference type="Reactome" id="R-DME-9865881">
    <property type="pathway name" value="Complex III assembly"/>
</dbReference>
<dbReference type="BioGRID-ORCS" id="31845">
    <property type="hits" value="0 hits in 1 CRISPR screen"/>
</dbReference>
<dbReference type="GenomeRNAi" id="31845"/>
<dbReference type="PRO" id="PR:Q9W385"/>
<dbReference type="Proteomes" id="UP000000803">
    <property type="component" value="Chromosome X"/>
</dbReference>
<dbReference type="Bgee" id="FBgn0030092">
    <property type="expression patterns" value="Expressed in secondary oocyte and 71 other cell types or tissues"/>
</dbReference>
<dbReference type="GO" id="GO:1904115">
    <property type="term" value="C:axon cytoplasm"/>
    <property type="evidence" value="ECO:0007669"/>
    <property type="project" value="GOC"/>
</dbReference>
<dbReference type="GO" id="GO:0099128">
    <property type="term" value="C:mitochondrial [2Fe-2S] assembly complex"/>
    <property type="evidence" value="ECO:0000250"/>
    <property type="project" value="FlyBase"/>
</dbReference>
<dbReference type="GO" id="GO:0005759">
    <property type="term" value="C:mitochondrial matrix"/>
    <property type="evidence" value="ECO:0000250"/>
    <property type="project" value="FlyBase"/>
</dbReference>
<dbReference type="GO" id="GO:0005739">
    <property type="term" value="C:mitochondrion"/>
    <property type="evidence" value="ECO:0000315"/>
    <property type="project" value="FlyBase"/>
</dbReference>
<dbReference type="GO" id="GO:0051537">
    <property type="term" value="F:2 iron, 2 sulfur cluster binding"/>
    <property type="evidence" value="ECO:0000318"/>
    <property type="project" value="GO_Central"/>
</dbReference>
<dbReference type="GO" id="GO:0008047">
    <property type="term" value="F:enzyme activator activity"/>
    <property type="evidence" value="ECO:0000250"/>
    <property type="project" value="FlyBase"/>
</dbReference>
<dbReference type="GO" id="GO:0008199">
    <property type="term" value="F:ferric iron binding"/>
    <property type="evidence" value="ECO:0000318"/>
    <property type="project" value="GO_Central"/>
</dbReference>
<dbReference type="GO" id="GO:0008198">
    <property type="term" value="F:ferrous iron binding"/>
    <property type="evidence" value="ECO:0000314"/>
    <property type="project" value="FlyBase"/>
</dbReference>
<dbReference type="GO" id="GO:0004322">
    <property type="term" value="F:ferroxidase activity"/>
    <property type="evidence" value="ECO:0000250"/>
    <property type="project" value="FlyBase"/>
</dbReference>
<dbReference type="GO" id="GO:0034986">
    <property type="term" value="F:iron chaperone activity"/>
    <property type="evidence" value="ECO:0000314"/>
    <property type="project" value="FlyBase"/>
</dbReference>
<dbReference type="GO" id="GO:0044571">
    <property type="term" value="P:[2Fe-2S] cluster assembly"/>
    <property type="evidence" value="ECO:0000250"/>
    <property type="project" value="FlyBase"/>
</dbReference>
<dbReference type="GO" id="GO:0008344">
    <property type="term" value="P:adult locomotory behavior"/>
    <property type="evidence" value="ECO:0000315"/>
    <property type="project" value="FlyBase"/>
</dbReference>
<dbReference type="GO" id="GO:0019896">
    <property type="term" value="P:axonal transport of mitochondrion"/>
    <property type="evidence" value="ECO:0000314"/>
    <property type="project" value="FlyBase"/>
</dbReference>
<dbReference type="GO" id="GO:0008340">
    <property type="term" value="P:determination of adult lifespan"/>
    <property type="evidence" value="ECO:0000315"/>
    <property type="project" value="FlyBase"/>
</dbReference>
<dbReference type="GO" id="GO:0006783">
    <property type="term" value="P:heme biosynthetic process"/>
    <property type="evidence" value="ECO:0000304"/>
    <property type="project" value="FlyBase"/>
</dbReference>
<dbReference type="GO" id="GO:0006879">
    <property type="term" value="P:intracellular iron ion homeostasis"/>
    <property type="evidence" value="ECO:0007669"/>
    <property type="project" value="UniProtKB-KW"/>
</dbReference>
<dbReference type="GO" id="GO:0006826">
    <property type="term" value="P:iron ion transport"/>
    <property type="evidence" value="ECO:0007669"/>
    <property type="project" value="UniProtKB-KW"/>
</dbReference>
<dbReference type="GO" id="GO:0016226">
    <property type="term" value="P:iron-sulfur cluster assembly"/>
    <property type="evidence" value="ECO:0000315"/>
    <property type="project" value="FlyBase"/>
</dbReference>
<dbReference type="GO" id="GO:0016042">
    <property type="term" value="P:lipid catabolic process"/>
    <property type="evidence" value="ECO:0000315"/>
    <property type="project" value="FlyBase"/>
</dbReference>
<dbReference type="GO" id="GO:0045998">
    <property type="term" value="P:positive regulation of ecdysteroid biosynthetic process"/>
    <property type="evidence" value="ECO:0000315"/>
    <property type="project" value="FlyBase"/>
</dbReference>
<dbReference type="GO" id="GO:0045823">
    <property type="term" value="P:positive regulation of heart contraction"/>
    <property type="evidence" value="ECO:0000315"/>
    <property type="project" value="FlyBase"/>
</dbReference>
<dbReference type="GO" id="GO:1903862">
    <property type="term" value="P:positive regulation of oxidative phosphorylation"/>
    <property type="evidence" value="ECO:0000314"/>
    <property type="project" value="FlyBase"/>
</dbReference>
<dbReference type="GO" id="GO:0051881">
    <property type="term" value="P:regulation of mitochondrial membrane potential"/>
    <property type="evidence" value="ECO:0000314"/>
    <property type="project" value="FlyBase"/>
</dbReference>
<dbReference type="GO" id="GO:0042542">
    <property type="term" value="P:response to hydrogen peroxide"/>
    <property type="evidence" value="ECO:0000315"/>
    <property type="project" value="FlyBase"/>
</dbReference>
<dbReference type="GO" id="GO:0010039">
    <property type="term" value="P:response to iron ion"/>
    <property type="evidence" value="ECO:0000315"/>
    <property type="project" value="FlyBase"/>
</dbReference>
<dbReference type="GO" id="GO:0006979">
    <property type="term" value="P:response to oxidative stress"/>
    <property type="evidence" value="ECO:0000315"/>
    <property type="project" value="FlyBase"/>
</dbReference>
<dbReference type="GO" id="GO:0006694">
    <property type="term" value="P:steroid biosynthetic process"/>
    <property type="evidence" value="ECO:0007669"/>
    <property type="project" value="UniProtKB-KW"/>
</dbReference>
<dbReference type="CDD" id="cd00503">
    <property type="entry name" value="Frataxin"/>
    <property type="match status" value="1"/>
</dbReference>
<dbReference type="FunFam" id="3.30.920.10:FF:000002">
    <property type="entry name" value="Frataxin, mitochondrial"/>
    <property type="match status" value="1"/>
</dbReference>
<dbReference type="Gene3D" id="3.30.920.10">
    <property type="entry name" value="Frataxin/CyaY"/>
    <property type="match status" value="1"/>
</dbReference>
<dbReference type="InterPro" id="IPR017789">
    <property type="entry name" value="Frataxin"/>
</dbReference>
<dbReference type="InterPro" id="IPR002908">
    <property type="entry name" value="Frataxin/CyaY"/>
</dbReference>
<dbReference type="InterPro" id="IPR036524">
    <property type="entry name" value="Frataxin/CyaY_sf"/>
</dbReference>
<dbReference type="InterPro" id="IPR020895">
    <property type="entry name" value="Frataxin_CS"/>
</dbReference>
<dbReference type="NCBIfam" id="TIGR03421">
    <property type="entry name" value="FeS_CyaY"/>
    <property type="match status" value="1"/>
</dbReference>
<dbReference type="NCBIfam" id="TIGR03422">
    <property type="entry name" value="mito_frataxin"/>
    <property type="match status" value="1"/>
</dbReference>
<dbReference type="PANTHER" id="PTHR16821">
    <property type="entry name" value="FRATAXIN"/>
    <property type="match status" value="1"/>
</dbReference>
<dbReference type="PANTHER" id="PTHR16821:SF2">
    <property type="entry name" value="FRATAXIN, MITOCHONDRIAL"/>
    <property type="match status" value="1"/>
</dbReference>
<dbReference type="Pfam" id="PF01491">
    <property type="entry name" value="Frataxin_Cyay"/>
    <property type="match status" value="1"/>
</dbReference>
<dbReference type="PRINTS" id="PR00904">
    <property type="entry name" value="FRATAXIN"/>
</dbReference>
<dbReference type="SMART" id="SM01219">
    <property type="entry name" value="Frataxin_Cyay"/>
    <property type="match status" value="1"/>
</dbReference>
<dbReference type="SUPFAM" id="SSF55387">
    <property type="entry name" value="Frataxin/Nqo15-like"/>
    <property type="match status" value="1"/>
</dbReference>
<dbReference type="PROSITE" id="PS01344">
    <property type="entry name" value="FRATAXIN_1"/>
    <property type="match status" value="1"/>
</dbReference>
<dbReference type="PROSITE" id="PS50810">
    <property type="entry name" value="FRATAXIN_2"/>
    <property type="match status" value="1"/>
</dbReference>
<name>FRDA_DROME</name>
<gene>
    <name evidence="8" type="primary">fh</name>
    <name evidence="8" type="ORF">CG8971</name>
</gene>
<keyword id="KW-0002">3D-structure</keyword>
<keyword id="KW-0350">Heme biosynthesis</keyword>
<keyword id="KW-0406">Ion transport</keyword>
<keyword id="KW-0408">Iron</keyword>
<keyword id="KW-0409">Iron storage</keyword>
<keyword id="KW-0410">Iron transport</keyword>
<keyword id="KW-0443">Lipid metabolism</keyword>
<keyword id="KW-0496">Mitochondrion</keyword>
<keyword id="KW-0560">Oxidoreductase</keyword>
<keyword id="KW-1185">Reference proteome</keyword>
<keyword id="KW-0753">Steroid metabolism</keyword>
<keyword id="KW-0755">Steroidogenesis</keyword>
<keyword id="KW-0809">Transit peptide</keyword>
<keyword id="KW-0813">Transport</keyword>
<organism evidence="9">
    <name type="scientific">Drosophila melanogaster</name>
    <name type="common">Fruit fly</name>
    <dbReference type="NCBI Taxonomy" id="7227"/>
    <lineage>
        <taxon>Eukaryota</taxon>
        <taxon>Metazoa</taxon>
        <taxon>Ecdysozoa</taxon>
        <taxon>Arthropoda</taxon>
        <taxon>Hexapoda</taxon>
        <taxon>Insecta</taxon>
        <taxon>Pterygota</taxon>
        <taxon>Neoptera</taxon>
        <taxon>Endopterygota</taxon>
        <taxon>Diptera</taxon>
        <taxon>Brachycera</taxon>
        <taxon>Muscomorpha</taxon>
        <taxon>Ephydroidea</taxon>
        <taxon>Drosophilidae</taxon>
        <taxon>Drosophila</taxon>
        <taxon>Sophophora</taxon>
    </lineage>
</organism>